<organism>
    <name type="scientific">Ehrlichia chaffeensis (strain ATCC CRL-10679 / Arkansas)</name>
    <dbReference type="NCBI Taxonomy" id="205920"/>
    <lineage>
        <taxon>Bacteria</taxon>
        <taxon>Pseudomonadati</taxon>
        <taxon>Pseudomonadota</taxon>
        <taxon>Alphaproteobacteria</taxon>
        <taxon>Rickettsiales</taxon>
        <taxon>Anaplasmataceae</taxon>
        <taxon>Ehrlichia</taxon>
    </lineage>
</organism>
<sequence>MSDNGDNNTKSPQHNNPQPNEKSDGKVQPGQPQVNPQRKFTAGINKKKEKLNEDLSELDKLRQQLIHFQNQFRLAVADKENVKRIMQKNIDDTSIYAISNFARDLLSSCDNLETSLKNLKEGDSIHAGVLMTYKELLNTLERHNITRIDPIGEKFNPQFHKAVSQMVDAEKDDNTILHVVQPGYIIKDKLLRAASVIISKKSD</sequence>
<name>GRPE_EHRCR</name>
<reference key="1">
    <citation type="journal article" date="2006" name="PLoS Genet.">
        <title>Comparative genomics of emerging human ehrlichiosis agents.</title>
        <authorList>
            <person name="Dunning Hotopp J.C."/>
            <person name="Lin M."/>
            <person name="Madupu R."/>
            <person name="Crabtree J."/>
            <person name="Angiuoli S.V."/>
            <person name="Eisen J.A."/>
            <person name="Seshadri R."/>
            <person name="Ren Q."/>
            <person name="Wu M."/>
            <person name="Utterback T.R."/>
            <person name="Smith S."/>
            <person name="Lewis M."/>
            <person name="Khouri H."/>
            <person name="Zhang C."/>
            <person name="Niu H."/>
            <person name="Lin Q."/>
            <person name="Ohashi N."/>
            <person name="Zhi N."/>
            <person name="Nelson W.C."/>
            <person name="Brinkac L.M."/>
            <person name="Dodson R.J."/>
            <person name="Rosovitz M.J."/>
            <person name="Sundaram J.P."/>
            <person name="Daugherty S.C."/>
            <person name="Davidsen T."/>
            <person name="Durkin A.S."/>
            <person name="Gwinn M.L."/>
            <person name="Haft D.H."/>
            <person name="Selengut J.D."/>
            <person name="Sullivan S.A."/>
            <person name="Zafar N."/>
            <person name="Zhou L."/>
            <person name="Benahmed F."/>
            <person name="Forberger H."/>
            <person name="Halpin R."/>
            <person name="Mulligan S."/>
            <person name="Robinson J."/>
            <person name="White O."/>
            <person name="Rikihisa Y."/>
            <person name="Tettelin H."/>
        </authorList>
    </citation>
    <scope>NUCLEOTIDE SEQUENCE [LARGE SCALE GENOMIC DNA]</scope>
    <source>
        <strain>ATCC CRL-10679 / Arkansas</strain>
    </source>
</reference>
<comment type="function">
    <text evidence="1">Participates actively in the response to hyperosmotic and heat shock by preventing the aggregation of stress-denatured proteins, in association with DnaK and GrpE. It is the nucleotide exchange factor for DnaK and may function as a thermosensor. Unfolded proteins bind initially to DnaJ; upon interaction with the DnaJ-bound protein, DnaK hydrolyzes its bound ATP, resulting in the formation of a stable complex. GrpE releases ADP from DnaK; ATP binding to DnaK triggers the release of the substrate protein, thus completing the reaction cycle. Several rounds of ATP-dependent interactions between DnaJ, DnaK and GrpE are required for fully efficient folding.</text>
</comment>
<comment type="subunit">
    <text evidence="1">Homodimer.</text>
</comment>
<comment type="subcellular location">
    <subcellularLocation>
        <location evidence="1">Cytoplasm</location>
    </subcellularLocation>
</comment>
<comment type="similarity">
    <text evidence="1">Belongs to the GrpE family.</text>
</comment>
<keyword id="KW-0143">Chaperone</keyword>
<keyword id="KW-0963">Cytoplasm</keyword>
<keyword id="KW-1185">Reference proteome</keyword>
<keyword id="KW-0346">Stress response</keyword>
<gene>
    <name evidence="1" type="primary">grpE</name>
    <name type="ordered locus">ECH_0168</name>
</gene>
<evidence type="ECO:0000255" key="1">
    <source>
        <dbReference type="HAMAP-Rule" id="MF_01151"/>
    </source>
</evidence>
<evidence type="ECO:0000256" key="2">
    <source>
        <dbReference type="SAM" id="MobiDB-lite"/>
    </source>
</evidence>
<protein>
    <recommendedName>
        <fullName evidence="1">Protein GrpE</fullName>
    </recommendedName>
    <alternativeName>
        <fullName evidence="1">HSP-70 cofactor</fullName>
    </alternativeName>
</protein>
<accession>Q2GHU0</accession>
<dbReference type="EMBL" id="CP000236">
    <property type="protein sequence ID" value="ABD44781.1"/>
    <property type="molecule type" value="Genomic_DNA"/>
</dbReference>
<dbReference type="RefSeq" id="WP_006010137.1">
    <property type="nucleotide sequence ID" value="NC_007799.1"/>
</dbReference>
<dbReference type="SMR" id="Q2GHU0"/>
<dbReference type="STRING" id="205920.ECH_0168"/>
<dbReference type="KEGG" id="ech:ECH_0168"/>
<dbReference type="eggNOG" id="COG0576">
    <property type="taxonomic scope" value="Bacteria"/>
</dbReference>
<dbReference type="HOGENOM" id="CLU_057217_6_2_5"/>
<dbReference type="OrthoDB" id="9789811at2"/>
<dbReference type="Proteomes" id="UP000008320">
    <property type="component" value="Chromosome"/>
</dbReference>
<dbReference type="GO" id="GO:0005737">
    <property type="term" value="C:cytoplasm"/>
    <property type="evidence" value="ECO:0007669"/>
    <property type="project" value="UniProtKB-SubCell"/>
</dbReference>
<dbReference type="GO" id="GO:0000774">
    <property type="term" value="F:adenyl-nucleotide exchange factor activity"/>
    <property type="evidence" value="ECO:0007669"/>
    <property type="project" value="InterPro"/>
</dbReference>
<dbReference type="GO" id="GO:0042803">
    <property type="term" value="F:protein homodimerization activity"/>
    <property type="evidence" value="ECO:0007669"/>
    <property type="project" value="InterPro"/>
</dbReference>
<dbReference type="GO" id="GO:0051087">
    <property type="term" value="F:protein-folding chaperone binding"/>
    <property type="evidence" value="ECO:0007669"/>
    <property type="project" value="InterPro"/>
</dbReference>
<dbReference type="GO" id="GO:0051082">
    <property type="term" value="F:unfolded protein binding"/>
    <property type="evidence" value="ECO:0007669"/>
    <property type="project" value="TreeGrafter"/>
</dbReference>
<dbReference type="GO" id="GO:0006457">
    <property type="term" value="P:protein folding"/>
    <property type="evidence" value="ECO:0007669"/>
    <property type="project" value="InterPro"/>
</dbReference>
<dbReference type="CDD" id="cd00446">
    <property type="entry name" value="GrpE"/>
    <property type="match status" value="1"/>
</dbReference>
<dbReference type="Gene3D" id="3.90.20.20">
    <property type="match status" value="1"/>
</dbReference>
<dbReference type="Gene3D" id="2.30.22.10">
    <property type="entry name" value="Head domain of nucleotide exchange factor GrpE"/>
    <property type="match status" value="1"/>
</dbReference>
<dbReference type="HAMAP" id="MF_01151">
    <property type="entry name" value="GrpE"/>
    <property type="match status" value="1"/>
</dbReference>
<dbReference type="InterPro" id="IPR000740">
    <property type="entry name" value="GrpE"/>
</dbReference>
<dbReference type="InterPro" id="IPR013805">
    <property type="entry name" value="GrpE_coiled_coil"/>
</dbReference>
<dbReference type="InterPro" id="IPR009012">
    <property type="entry name" value="GrpE_head"/>
</dbReference>
<dbReference type="PANTHER" id="PTHR21237">
    <property type="entry name" value="GRPE PROTEIN"/>
    <property type="match status" value="1"/>
</dbReference>
<dbReference type="PANTHER" id="PTHR21237:SF23">
    <property type="entry name" value="GRPE PROTEIN HOMOLOG, MITOCHONDRIAL"/>
    <property type="match status" value="1"/>
</dbReference>
<dbReference type="Pfam" id="PF01025">
    <property type="entry name" value="GrpE"/>
    <property type="match status" value="1"/>
</dbReference>
<dbReference type="PRINTS" id="PR00773">
    <property type="entry name" value="GRPEPROTEIN"/>
</dbReference>
<dbReference type="SUPFAM" id="SSF58014">
    <property type="entry name" value="Coiled-coil domain of nucleotide exchange factor GrpE"/>
    <property type="match status" value="1"/>
</dbReference>
<dbReference type="SUPFAM" id="SSF51064">
    <property type="entry name" value="Head domain of nucleotide exchange factor GrpE"/>
    <property type="match status" value="1"/>
</dbReference>
<dbReference type="PROSITE" id="PS01071">
    <property type="entry name" value="GRPE"/>
    <property type="match status" value="1"/>
</dbReference>
<feature type="chain" id="PRO_1000164192" description="Protein GrpE">
    <location>
        <begin position="1"/>
        <end position="203"/>
    </location>
</feature>
<feature type="region of interest" description="Disordered" evidence="2">
    <location>
        <begin position="1"/>
        <end position="46"/>
    </location>
</feature>
<feature type="compositionally biased region" description="Polar residues" evidence="2">
    <location>
        <begin position="1"/>
        <end position="20"/>
    </location>
</feature>
<proteinExistence type="inferred from homology"/>